<feature type="chain" id="PRO_0000161435" description="tRNA uridine(34) hydroxylase">
    <location>
        <begin position="1"/>
        <end position="277"/>
    </location>
</feature>
<feature type="domain" description="Rhodanese" evidence="1">
    <location>
        <begin position="126"/>
        <end position="221"/>
    </location>
</feature>
<feature type="active site" description="Cysteine persulfide intermediate" evidence="1">
    <location>
        <position position="181"/>
    </location>
</feature>
<organism>
    <name type="scientific">Anaplasma marginale (strain St. Maries)</name>
    <dbReference type="NCBI Taxonomy" id="234826"/>
    <lineage>
        <taxon>Bacteria</taxon>
        <taxon>Pseudomonadati</taxon>
        <taxon>Pseudomonadota</taxon>
        <taxon>Alphaproteobacteria</taxon>
        <taxon>Rickettsiales</taxon>
        <taxon>Anaplasmataceae</taxon>
        <taxon>Anaplasma</taxon>
    </lineage>
</organism>
<accession>Q5PBC6</accession>
<protein>
    <recommendedName>
        <fullName evidence="1">tRNA uridine(34) hydroxylase</fullName>
        <ecNumber evidence="1">1.14.-.-</ecNumber>
    </recommendedName>
    <alternativeName>
        <fullName evidence="1">tRNA hydroxylation protein O</fullName>
    </alternativeName>
</protein>
<reference key="1">
    <citation type="journal article" date="2005" name="Proc. Natl. Acad. Sci. U.S.A.">
        <title>Complete genome sequencing of Anaplasma marginale reveals that the surface is skewed to two superfamilies of outer membrane proteins.</title>
        <authorList>
            <person name="Brayton K.A."/>
            <person name="Kappmeyer L.S."/>
            <person name="Herndon D.R."/>
            <person name="Dark M.J."/>
            <person name="Tibbals D.L."/>
            <person name="Palmer G.H."/>
            <person name="McGuire T.C."/>
            <person name="Knowles D.P. Jr."/>
        </authorList>
    </citation>
    <scope>NUCLEOTIDE SEQUENCE [LARGE SCALE GENOMIC DNA]</scope>
    <source>
        <strain>St. Maries</strain>
    </source>
</reference>
<gene>
    <name evidence="1" type="primary">trhO</name>
    <name type="ordered locus">AM315</name>
</gene>
<keyword id="KW-0560">Oxidoreductase</keyword>
<keyword id="KW-0819">tRNA processing</keyword>
<dbReference type="EC" id="1.14.-.-" evidence="1"/>
<dbReference type="EMBL" id="CP000030">
    <property type="protein sequence ID" value="AAV86403.1"/>
    <property type="molecule type" value="Genomic_DNA"/>
</dbReference>
<dbReference type="SMR" id="Q5PBC6"/>
<dbReference type="KEGG" id="ama:AM315"/>
<dbReference type="HOGENOM" id="CLU_038878_0_1_5"/>
<dbReference type="GO" id="GO:0016705">
    <property type="term" value="F:oxidoreductase activity, acting on paired donors, with incorporation or reduction of molecular oxygen"/>
    <property type="evidence" value="ECO:0007669"/>
    <property type="project" value="UniProtKB-UniRule"/>
</dbReference>
<dbReference type="GO" id="GO:0006400">
    <property type="term" value="P:tRNA modification"/>
    <property type="evidence" value="ECO:0007669"/>
    <property type="project" value="UniProtKB-UniRule"/>
</dbReference>
<dbReference type="CDD" id="cd01518">
    <property type="entry name" value="RHOD_YceA"/>
    <property type="match status" value="1"/>
</dbReference>
<dbReference type="Gene3D" id="3.30.70.100">
    <property type="match status" value="1"/>
</dbReference>
<dbReference type="Gene3D" id="3.40.250.10">
    <property type="entry name" value="Rhodanese-like domain"/>
    <property type="match status" value="1"/>
</dbReference>
<dbReference type="HAMAP" id="MF_00469">
    <property type="entry name" value="TrhO"/>
    <property type="match status" value="1"/>
</dbReference>
<dbReference type="InterPro" id="IPR001763">
    <property type="entry name" value="Rhodanese-like_dom"/>
</dbReference>
<dbReference type="InterPro" id="IPR036873">
    <property type="entry name" value="Rhodanese-like_dom_sf"/>
</dbReference>
<dbReference type="InterPro" id="IPR020936">
    <property type="entry name" value="TrhO"/>
</dbReference>
<dbReference type="InterPro" id="IPR040503">
    <property type="entry name" value="TRHO_N"/>
</dbReference>
<dbReference type="NCBIfam" id="NF001136">
    <property type="entry name" value="PRK00142.1-4"/>
    <property type="match status" value="1"/>
</dbReference>
<dbReference type="PANTHER" id="PTHR43268:SF3">
    <property type="entry name" value="RHODANESE-LIKE DOMAIN-CONTAINING PROTEIN 7-RELATED"/>
    <property type="match status" value="1"/>
</dbReference>
<dbReference type="PANTHER" id="PTHR43268">
    <property type="entry name" value="THIOSULFATE SULFURTRANSFERASE/RHODANESE-LIKE DOMAIN-CONTAINING PROTEIN 2"/>
    <property type="match status" value="1"/>
</dbReference>
<dbReference type="Pfam" id="PF00581">
    <property type="entry name" value="Rhodanese"/>
    <property type="match status" value="1"/>
</dbReference>
<dbReference type="Pfam" id="PF17773">
    <property type="entry name" value="UPF0176_N"/>
    <property type="match status" value="1"/>
</dbReference>
<dbReference type="SMART" id="SM00450">
    <property type="entry name" value="RHOD"/>
    <property type="match status" value="1"/>
</dbReference>
<dbReference type="SUPFAM" id="SSF52821">
    <property type="entry name" value="Rhodanese/Cell cycle control phosphatase"/>
    <property type="match status" value="1"/>
</dbReference>
<dbReference type="PROSITE" id="PS50206">
    <property type="entry name" value="RHODANESE_3"/>
    <property type="match status" value="1"/>
</dbReference>
<name>TRHO_ANAMM</name>
<sequence length="277" mass="31852">MLFRAMGYVIAAFYRFVHLHNYYDMKPVILEFCLSRGIKGTVILAEQGINATIAGSRQSIGEFFSFLDSDDRLRGMKYHESHSDREPFAKMKVRLKREVVRLGIDGFDCSLRGEYIDPRDWDEFVSSPDVHVIDTRNDYEVRLGRFKGAIDPGTSSFREFPEWARNWALDKERDTCVAMYCTGGIRCEKSTAFMRSLGFRNVYHLRGGILNYLETMRGDDSLWEGECFVFDDRIAVDRNVSPSEDIKCIKCAGEVDASDLRSVSKGNIMCWDCRLQA</sequence>
<comment type="function">
    <text evidence="1">Catalyzes oxygen-dependent 5-hydroxyuridine (ho5U) modification at position 34 in tRNAs.</text>
</comment>
<comment type="catalytic activity">
    <reaction evidence="1">
        <text>uridine(34) in tRNA + AH2 + O2 = 5-hydroxyuridine(34) in tRNA + A + H2O</text>
        <dbReference type="Rhea" id="RHEA:64224"/>
        <dbReference type="Rhea" id="RHEA-COMP:11727"/>
        <dbReference type="Rhea" id="RHEA-COMP:13381"/>
        <dbReference type="ChEBI" id="CHEBI:13193"/>
        <dbReference type="ChEBI" id="CHEBI:15377"/>
        <dbReference type="ChEBI" id="CHEBI:15379"/>
        <dbReference type="ChEBI" id="CHEBI:17499"/>
        <dbReference type="ChEBI" id="CHEBI:65315"/>
        <dbReference type="ChEBI" id="CHEBI:136877"/>
    </reaction>
</comment>
<comment type="similarity">
    <text evidence="1">Belongs to the TrhO family.</text>
</comment>
<proteinExistence type="inferred from homology"/>
<evidence type="ECO:0000255" key="1">
    <source>
        <dbReference type="HAMAP-Rule" id="MF_00469"/>
    </source>
</evidence>